<feature type="chain" id="PRO_0000325351" description="3-phosphoshikimate 1-carboxyvinyltransferase">
    <location>
        <begin position="1"/>
        <end position="442"/>
    </location>
</feature>
<feature type="active site" description="Proton acceptor" evidence="1">
    <location>
        <position position="321"/>
    </location>
</feature>
<feature type="binding site" evidence="1">
    <location>
        <position position="27"/>
    </location>
    <ligand>
        <name>3-phosphoshikimate</name>
        <dbReference type="ChEBI" id="CHEBI:145989"/>
    </ligand>
</feature>
<feature type="binding site" evidence="1">
    <location>
        <position position="27"/>
    </location>
    <ligand>
        <name>phosphoenolpyruvate</name>
        <dbReference type="ChEBI" id="CHEBI:58702"/>
    </ligand>
</feature>
<feature type="binding site" evidence="1">
    <location>
        <position position="28"/>
    </location>
    <ligand>
        <name>3-phosphoshikimate</name>
        <dbReference type="ChEBI" id="CHEBI:145989"/>
    </ligand>
</feature>
<feature type="binding site" evidence="1">
    <location>
        <position position="32"/>
    </location>
    <ligand>
        <name>3-phosphoshikimate</name>
        <dbReference type="ChEBI" id="CHEBI:145989"/>
    </ligand>
</feature>
<feature type="binding site" evidence="1">
    <location>
        <position position="100"/>
    </location>
    <ligand>
        <name>phosphoenolpyruvate</name>
        <dbReference type="ChEBI" id="CHEBI:58702"/>
    </ligand>
</feature>
<feature type="binding site" evidence="1">
    <location>
        <position position="128"/>
    </location>
    <ligand>
        <name>phosphoenolpyruvate</name>
        <dbReference type="ChEBI" id="CHEBI:58702"/>
    </ligand>
</feature>
<feature type="binding site" evidence="1">
    <location>
        <position position="174"/>
    </location>
    <ligand>
        <name>3-phosphoshikimate</name>
        <dbReference type="ChEBI" id="CHEBI:145989"/>
    </ligand>
</feature>
<feature type="binding site" evidence="1">
    <location>
        <position position="175"/>
    </location>
    <ligand>
        <name>3-phosphoshikimate</name>
        <dbReference type="ChEBI" id="CHEBI:145989"/>
    </ligand>
</feature>
<feature type="binding site" evidence="1">
    <location>
        <position position="176"/>
    </location>
    <ligand>
        <name>3-phosphoshikimate</name>
        <dbReference type="ChEBI" id="CHEBI:145989"/>
    </ligand>
</feature>
<feature type="binding site" evidence="1">
    <location>
        <position position="176"/>
    </location>
    <ligand>
        <name>phosphoenolpyruvate</name>
        <dbReference type="ChEBI" id="CHEBI:58702"/>
    </ligand>
</feature>
<feature type="binding site" evidence="1">
    <location>
        <position position="204"/>
    </location>
    <ligand>
        <name>3-phosphoshikimate</name>
        <dbReference type="ChEBI" id="CHEBI:145989"/>
    </ligand>
</feature>
<feature type="binding site" evidence="1">
    <location>
        <position position="321"/>
    </location>
    <ligand>
        <name>3-phosphoshikimate</name>
        <dbReference type="ChEBI" id="CHEBI:145989"/>
    </ligand>
</feature>
<feature type="binding site" evidence="1">
    <location>
        <position position="348"/>
    </location>
    <ligand>
        <name>3-phosphoshikimate</name>
        <dbReference type="ChEBI" id="CHEBI:145989"/>
    </ligand>
</feature>
<feature type="binding site" evidence="1">
    <location>
        <position position="352"/>
    </location>
    <ligand>
        <name>phosphoenolpyruvate</name>
        <dbReference type="ChEBI" id="CHEBI:58702"/>
    </ligand>
</feature>
<feature type="binding site" evidence="1">
    <location>
        <position position="394"/>
    </location>
    <ligand>
        <name>phosphoenolpyruvate</name>
        <dbReference type="ChEBI" id="CHEBI:58702"/>
    </ligand>
</feature>
<feature type="binding site" evidence="1">
    <location>
        <position position="424"/>
    </location>
    <ligand>
        <name>phosphoenolpyruvate</name>
        <dbReference type="ChEBI" id="CHEBI:58702"/>
    </ligand>
</feature>
<comment type="function">
    <text evidence="1">Catalyzes the transfer of the enolpyruvyl moiety of phosphoenolpyruvate (PEP) to the 5-hydroxyl of shikimate-3-phosphate (S3P) to produce enolpyruvyl shikimate-3-phosphate and inorganic phosphate.</text>
</comment>
<comment type="catalytic activity">
    <reaction evidence="1">
        <text>3-phosphoshikimate + phosphoenolpyruvate = 5-O-(1-carboxyvinyl)-3-phosphoshikimate + phosphate</text>
        <dbReference type="Rhea" id="RHEA:21256"/>
        <dbReference type="ChEBI" id="CHEBI:43474"/>
        <dbReference type="ChEBI" id="CHEBI:57701"/>
        <dbReference type="ChEBI" id="CHEBI:58702"/>
        <dbReference type="ChEBI" id="CHEBI:145989"/>
        <dbReference type="EC" id="2.5.1.19"/>
    </reaction>
    <physiologicalReaction direction="left-to-right" evidence="1">
        <dbReference type="Rhea" id="RHEA:21257"/>
    </physiologicalReaction>
</comment>
<comment type="pathway">
    <text evidence="1">Metabolic intermediate biosynthesis; chorismate biosynthesis; chorismate from D-erythrose 4-phosphate and phosphoenolpyruvate: step 6/7.</text>
</comment>
<comment type="subunit">
    <text evidence="1">Monomer.</text>
</comment>
<comment type="subcellular location">
    <subcellularLocation>
        <location evidence="1">Cytoplasm</location>
    </subcellularLocation>
</comment>
<comment type="similarity">
    <text evidence="1">Belongs to the EPSP synthase family.</text>
</comment>
<keyword id="KW-0028">Amino-acid biosynthesis</keyword>
<keyword id="KW-0057">Aromatic amino acid biosynthesis</keyword>
<keyword id="KW-0963">Cytoplasm</keyword>
<keyword id="KW-1185">Reference proteome</keyword>
<keyword id="KW-0808">Transferase</keyword>
<accession>A4G861</accession>
<reference key="1">
    <citation type="journal article" date="2007" name="PLoS Genet.">
        <title>A tale of two oxidation states: bacterial colonization of arsenic-rich environments.</title>
        <authorList>
            <person name="Muller D."/>
            <person name="Medigue C."/>
            <person name="Koechler S."/>
            <person name="Barbe V."/>
            <person name="Barakat M."/>
            <person name="Talla E."/>
            <person name="Bonnefoy V."/>
            <person name="Krin E."/>
            <person name="Arsene-Ploetze F."/>
            <person name="Carapito C."/>
            <person name="Chandler M."/>
            <person name="Cournoyer B."/>
            <person name="Cruveiller S."/>
            <person name="Dossat C."/>
            <person name="Duval S."/>
            <person name="Heymann M."/>
            <person name="Leize E."/>
            <person name="Lieutaud A."/>
            <person name="Lievremont D."/>
            <person name="Makita Y."/>
            <person name="Mangenot S."/>
            <person name="Nitschke W."/>
            <person name="Ortet P."/>
            <person name="Perdrial N."/>
            <person name="Schoepp B."/>
            <person name="Siguier P."/>
            <person name="Simeonova D.D."/>
            <person name="Rouy Z."/>
            <person name="Segurens B."/>
            <person name="Turlin E."/>
            <person name="Vallenet D."/>
            <person name="van Dorsselaer A."/>
            <person name="Weiss S."/>
            <person name="Weissenbach J."/>
            <person name="Lett M.-C."/>
            <person name="Danchin A."/>
            <person name="Bertin P.N."/>
        </authorList>
    </citation>
    <scope>NUCLEOTIDE SEQUENCE [LARGE SCALE GENOMIC DNA]</scope>
    <source>
        <strain>ULPAs1</strain>
    </source>
</reference>
<name>AROA_HERAR</name>
<proteinExistence type="inferred from homology"/>
<organism>
    <name type="scientific">Herminiimonas arsenicoxydans</name>
    <dbReference type="NCBI Taxonomy" id="204773"/>
    <lineage>
        <taxon>Bacteria</taxon>
        <taxon>Pseudomonadati</taxon>
        <taxon>Pseudomonadota</taxon>
        <taxon>Betaproteobacteria</taxon>
        <taxon>Burkholderiales</taxon>
        <taxon>Oxalobacteraceae</taxon>
        <taxon>Herminiimonas</taxon>
    </lineage>
</organism>
<sequence>MNKHYPHYLDLQPAMHAKGVVRLPGSKSISNRTLLLAALADGTTQIRDLLASDDTHVMLMALQKIGVKWEQIGESQDYVVHGVNGAFPVHQADLFMGNAGTAIRPLTAALAVTGGDYTLHGVSRMHERPIGDLVDALNAIGTHIEYTGEPGYPPLHIQRGRIHAQRMQVRGNVSSQFLTALLMAAPLMAREQDVTIDVVGELISKPYIEITLNLMRRFGVEVQRDGWQSFTIAAGQRYISPGIIHVEGDASSASYFLAAGAIAGGPVRVEGVGKNSIQGDVRFVESLQQMGATITMGDNWIEAKSNGALRAIDADFNHIPDAAMTIAVAALYADGTSTLRNIGSWRVKETDRISAMTIELRKLGASVEEGEDYLRITPPAVIQPAAIDTYDDHRMAMCFSLATLDGAIRKGSKIRINDPQCVAKTFPDYFTAFAKVTEDSLF</sequence>
<dbReference type="EC" id="2.5.1.19" evidence="1"/>
<dbReference type="EMBL" id="CU207211">
    <property type="protein sequence ID" value="CAL62698.2"/>
    <property type="molecule type" value="Genomic_DNA"/>
</dbReference>
<dbReference type="SMR" id="A4G861"/>
<dbReference type="STRING" id="204773.HEAR2576"/>
<dbReference type="KEGG" id="har:HEAR2576"/>
<dbReference type="eggNOG" id="COG0128">
    <property type="taxonomic scope" value="Bacteria"/>
</dbReference>
<dbReference type="HOGENOM" id="CLU_024321_0_0_4"/>
<dbReference type="OrthoDB" id="9809920at2"/>
<dbReference type="UniPathway" id="UPA00053">
    <property type="reaction ID" value="UER00089"/>
</dbReference>
<dbReference type="Proteomes" id="UP000006697">
    <property type="component" value="Chromosome"/>
</dbReference>
<dbReference type="GO" id="GO:0005737">
    <property type="term" value="C:cytoplasm"/>
    <property type="evidence" value="ECO:0007669"/>
    <property type="project" value="UniProtKB-SubCell"/>
</dbReference>
<dbReference type="GO" id="GO:0003866">
    <property type="term" value="F:3-phosphoshikimate 1-carboxyvinyltransferase activity"/>
    <property type="evidence" value="ECO:0007669"/>
    <property type="project" value="UniProtKB-UniRule"/>
</dbReference>
<dbReference type="GO" id="GO:0008652">
    <property type="term" value="P:amino acid biosynthetic process"/>
    <property type="evidence" value="ECO:0007669"/>
    <property type="project" value="UniProtKB-KW"/>
</dbReference>
<dbReference type="GO" id="GO:0009073">
    <property type="term" value="P:aromatic amino acid family biosynthetic process"/>
    <property type="evidence" value="ECO:0007669"/>
    <property type="project" value="UniProtKB-KW"/>
</dbReference>
<dbReference type="GO" id="GO:0009423">
    <property type="term" value="P:chorismate biosynthetic process"/>
    <property type="evidence" value="ECO:0007669"/>
    <property type="project" value="UniProtKB-UniRule"/>
</dbReference>
<dbReference type="CDD" id="cd01556">
    <property type="entry name" value="EPSP_synthase"/>
    <property type="match status" value="1"/>
</dbReference>
<dbReference type="FunFam" id="3.65.10.10:FF:000003">
    <property type="entry name" value="3-phosphoshikimate 1-carboxyvinyltransferase"/>
    <property type="match status" value="1"/>
</dbReference>
<dbReference type="FunFam" id="3.65.10.10:FF:000004">
    <property type="entry name" value="3-phosphoshikimate 1-carboxyvinyltransferase"/>
    <property type="match status" value="1"/>
</dbReference>
<dbReference type="Gene3D" id="3.65.10.10">
    <property type="entry name" value="Enolpyruvate transferase domain"/>
    <property type="match status" value="2"/>
</dbReference>
<dbReference type="HAMAP" id="MF_00210">
    <property type="entry name" value="EPSP_synth"/>
    <property type="match status" value="1"/>
</dbReference>
<dbReference type="InterPro" id="IPR001986">
    <property type="entry name" value="Enolpyruvate_Tfrase_dom"/>
</dbReference>
<dbReference type="InterPro" id="IPR036968">
    <property type="entry name" value="Enolpyruvate_Tfrase_sf"/>
</dbReference>
<dbReference type="InterPro" id="IPR006264">
    <property type="entry name" value="EPSP_synthase"/>
</dbReference>
<dbReference type="InterPro" id="IPR023193">
    <property type="entry name" value="EPSP_synthase_CS"/>
</dbReference>
<dbReference type="InterPro" id="IPR013792">
    <property type="entry name" value="RNA3'P_cycl/enolpyr_Trfase_a/b"/>
</dbReference>
<dbReference type="NCBIfam" id="TIGR01356">
    <property type="entry name" value="aroA"/>
    <property type="match status" value="1"/>
</dbReference>
<dbReference type="PANTHER" id="PTHR21090">
    <property type="entry name" value="AROM/DEHYDROQUINATE SYNTHASE"/>
    <property type="match status" value="1"/>
</dbReference>
<dbReference type="PANTHER" id="PTHR21090:SF5">
    <property type="entry name" value="PENTAFUNCTIONAL AROM POLYPEPTIDE"/>
    <property type="match status" value="1"/>
</dbReference>
<dbReference type="Pfam" id="PF00275">
    <property type="entry name" value="EPSP_synthase"/>
    <property type="match status" value="1"/>
</dbReference>
<dbReference type="PIRSF" id="PIRSF000505">
    <property type="entry name" value="EPSPS"/>
    <property type="match status" value="1"/>
</dbReference>
<dbReference type="SUPFAM" id="SSF55205">
    <property type="entry name" value="EPT/RTPC-like"/>
    <property type="match status" value="1"/>
</dbReference>
<dbReference type="PROSITE" id="PS00104">
    <property type="entry name" value="EPSP_SYNTHASE_1"/>
    <property type="match status" value="1"/>
</dbReference>
<dbReference type="PROSITE" id="PS00885">
    <property type="entry name" value="EPSP_SYNTHASE_2"/>
    <property type="match status" value="1"/>
</dbReference>
<gene>
    <name evidence="1" type="primary">aroA</name>
    <name type="ordered locus">HEAR2576</name>
</gene>
<evidence type="ECO:0000255" key="1">
    <source>
        <dbReference type="HAMAP-Rule" id="MF_00210"/>
    </source>
</evidence>
<protein>
    <recommendedName>
        <fullName evidence="1">3-phosphoshikimate 1-carboxyvinyltransferase</fullName>
        <ecNumber evidence="1">2.5.1.19</ecNumber>
    </recommendedName>
    <alternativeName>
        <fullName evidence="1">5-enolpyruvylshikimate-3-phosphate synthase</fullName>
        <shortName evidence="1">EPSP synthase</shortName>
        <shortName evidence="1">EPSPS</shortName>
    </alternativeName>
</protein>